<feature type="chain" id="PRO_1000139705" description="Putative N-acetylmannosamine-6-phosphate 2-epimerase">
    <location>
        <begin position="1"/>
        <end position="229"/>
    </location>
</feature>
<keyword id="KW-0119">Carbohydrate metabolism</keyword>
<keyword id="KW-0413">Isomerase</keyword>
<organism>
    <name type="scientific">Escherichia coli O7:K1 (strain IAI39 / ExPEC)</name>
    <dbReference type="NCBI Taxonomy" id="585057"/>
    <lineage>
        <taxon>Bacteria</taxon>
        <taxon>Pseudomonadati</taxon>
        <taxon>Pseudomonadota</taxon>
        <taxon>Gammaproteobacteria</taxon>
        <taxon>Enterobacterales</taxon>
        <taxon>Enterobacteriaceae</taxon>
        <taxon>Escherichia</taxon>
    </lineage>
</organism>
<sequence>MSLLVQLDQKIAANGGLIVSCQPVPDSPLDKPEIVAAMALAAEQAGAVAIRIEGVANLQATRAVVSVPIIGIVKRDLEDSPVRITAYIEDVDALAQAGADIIAIDGTDRPRPVPVETLLARIHHHGLLAMTDCSTPEDGLACQKLGAEIIGTTLSGYTTPETPEEPDLALVKTLSDAGCRVIAEGRYNTPAQAADAMRHGAWAVTVGSAITRLEHICQWYNTAMKKAVL</sequence>
<reference key="1">
    <citation type="journal article" date="2009" name="PLoS Genet.">
        <title>Organised genome dynamics in the Escherichia coli species results in highly diverse adaptive paths.</title>
        <authorList>
            <person name="Touchon M."/>
            <person name="Hoede C."/>
            <person name="Tenaillon O."/>
            <person name="Barbe V."/>
            <person name="Baeriswyl S."/>
            <person name="Bidet P."/>
            <person name="Bingen E."/>
            <person name="Bonacorsi S."/>
            <person name="Bouchier C."/>
            <person name="Bouvet O."/>
            <person name="Calteau A."/>
            <person name="Chiapello H."/>
            <person name="Clermont O."/>
            <person name="Cruveiller S."/>
            <person name="Danchin A."/>
            <person name="Diard M."/>
            <person name="Dossat C."/>
            <person name="Karoui M.E."/>
            <person name="Frapy E."/>
            <person name="Garry L."/>
            <person name="Ghigo J.M."/>
            <person name="Gilles A.M."/>
            <person name="Johnson J."/>
            <person name="Le Bouguenec C."/>
            <person name="Lescat M."/>
            <person name="Mangenot S."/>
            <person name="Martinez-Jehanne V."/>
            <person name="Matic I."/>
            <person name="Nassif X."/>
            <person name="Oztas S."/>
            <person name="Petit M.A."/>
            <person name="Pichon C."/>
            <person name="Rouy Z."/>
            <person name="Ruf C.S."/>
            <person name="Schneider D."/>
            <person name="Tourret J."/>
            <person name="Vacherie B."/>
            <person name="Vallenet D."/>
            <person name="Medigue C."/>
            <person name="Rocha E.P.C."/>
            <person name="Denamur E."/>
        </authorList>
    </citation>
    <scope>NUCLEOTIDE SEQUENCE [LARGE SCALE GENOMIC DNA]</scope>
    <source>
        <strain>IAI39 / ExPEC</strain>
    </source>
</reference>
<dbReference type="EC" id="5.1.3.9" evidence="1"/>
<dbReference type="EMBL" id="CU928164">
    <property type="protein sequence ID" value="CAR19828.1"/>
    <property type="molecule type" value="Genomic_DNA"/>
</dbReference>
<dbReference type="RefSeq" id="WP_012602542.1">
    <property type="nucleotide sequence ID" value="NC_011750.1"/>
</dbReference>
<dbReference type="RefSeq" id="YP_002409615.1">
    <property type="nucleotide sequence ID" value="NC_011750.1"/>
</dbReference>
<dbReference type="SMR" id="B7NKT4"/>
<dbReference type="STRING" id="585057.ECIAI39_3712"/>
<dbReference type="KEGG" id="ect:ECIAI39_3712"/>
<dbReference type="PATRIC" id="fig|585057.6.peg.3847"/>
<dbReference type="HOGENOM" id="CLU_086300_0_0_6"/>
<dbReference type="UniPathway" id="UPA00629">
    <property type="reaction ID" value="UER00682"/>
</dbReference>
<dbReference type="Proteomes" id="UP000000749">
    <property type="component" value="Chromosome"/>
</dbReference>
<dbReference type="GO" id="GO:0005829">
    <property type="term" value="C:cytosol"/>
    <property type="evidence" value="ECO:0007669"/>
    <property type="project" value="TreeGrafter"/>
</dbReference>
<dbReference type="GO" id="GO:0047465">
    <property type="term" value="F:N-acylglucosamine-6-phosphate 2-epimerase activity"/>
    <property type="evidence" value="ECO:0007669"/>
    <property type="project" value="UniProtKB-EC"/>
</dbReference>
<dbReference type="GO" id="GO:0005975">
    <property type="term" value="P:carbohydrate metabolic process"/>
    <property type="evidence" value="ECO:0007669"/>
    <property type="project" value="UniProtKB-UniRule"/>
</dbReference>
<dbReference type="GO" id="GO:0006053">
    <property type="term" value="P:N-acetylmannosamine catabolic process"/>
    <property type="evidence" value="ECO:0007669"/>
    <property type="project" value="TreeGrafter"/>
</dbReference>
<dbReference type="GO" id="GO:0019262">
    <property type="term" value="P:N-acetylneuraminate catabolic process"/>
    <property type="evidence" value="ECO:0007669"/>
    <property type="project" value="UniProtKB-UniRule"/>
</dbReference>
<dbReference type="CDD" id="cd04729">
    <property type="entry name" value="NanE"/>
    <property type="match status" value="1"/>
</dbReference>
<dbReference type="FunFam" id="3.20.20.70:FF:000035">
    <property type="entry name" value="Putative N-acetylmannosamine-6-phosphate 2-epimerase"/>
    <property type="match status" value="1"/>
</dbReference>
<dbReference type="Gene3D" id="3.20.20.70">
    <property type="entry name" value="Aldolase class I"/>
    <property type="match status" value="1"/>
</dbReference>
<dbReference type="HAMAP" id="MF_01235">
    <property type="entry name" value="ManNAc6P_epimer"/>
    <property type="match status" value="1"/>
</dbReference>
<dbReference type="InterPro" id="IPR013785">
    <property type="entry name" value="Aldolase_TIM"/>
</dbReference>
<dbReference type="InterPro" id="IPR007260">
    <property type="entry name" value="NanE"/>
</dbReference>
<dbReference type="InterPro" id="IPR011060">
    <property type="entry name" value="RibuloseP-bd_barrel"/>
</dbReference>
<dbReference type="NCBIfam" id="NF002231">
    <property type="entry name" value="PRK01130.1"/>
    <property type="match status" value="1"/>
</dbReference>
<dbReference type="PANTHER" id="PTHR36204">
    <property type="entry name" value="N-ACETYLMANNOSAMINE-6-PHOSPHATE 2-EPIMERASE-RELATED"/>
    <property type="match status" value="1"/>
</dbReference>
<dbReference type="PANTHER" id="PTHR36204:SF1">
    <property type="entry name" value="N-ACETYLMANNOSAMINE-6-PHOSPHATE 2-EPIMERASE-RELATED"/>
    <property type="match status" value="1"/>
</dbReference>
<dbReference type="Pfam" id="PF04131">
    <property type="entry name" value="NanE"/>
    <property type="match status" value="1"/>
</dbReference>
<dbReference type="SUPFAM" id="SSF51366">
    <property type="entry name" value="Ribulose-phoshate binding barrel"/>
    <property type="match status" value="1"/>
</dbReference>
<name>NANE_ECO7I</name>
<gene>
    <name evidence="1" type="primary">nanE</name>
    <name type="ordered locus">ECIAI39_3712</name>
</gene>
<evidence type="ECO:0000255" key="1">
    <source>
        <dbReference type="HAMAP-Rule" id="MF_01235"/>
    </source>
</evidence>
<comment type="function">
    <text evidence="1">Converts N-acetylmannosamine-6-phosphate (ManNAc-6-P) to N-acetylglucosamine-6-phosphate (GlcNAc-6-P).</text>
</comment>
<comment type="catalytic activity">
    <reaction evidence="1">
        <text>an N-acyl-D-glucosamine 6-phosphate = an N-acyl-D-mannosamine 6-phosphate</text>
        <dbReference type="Rhea" id="RHEA:23932"/>
        <dbReference type="ChEBI" id="CHEBI:57599"/>
        <dbReference type="ChEBI" id="CHEBI:57666"/>
        <dbReference type="EC" id="5.1.3.9"/>
    </reaction>
</comment>
<comment type="pathway">
    <text evidence="1">Amino-sugar metabolism; N-acetylneuraminate degradation; D-fructose 6-phosphate from N-acetylneuraminate: step 3/5.</text>
</comment>
<comment type="similarity">
    <text evidence="1">Belongs to the NanE family.</text>
</comment>
<protein>
    <recommendedName>
        <fullName evidence="1">Putative N-acetylmannosamine-6-phosphate 2-epimerase</fullName>
        <ecNumber evidence="1">5.1.3.9</ecNumber>
    </recommendedName>
    <alternativeName>
        <fullName evidence="1">ManNAc-6-P epimerase</fullName>
    </alternativeName>
</protein>
<accession>B7NKT4</accession>
<proteinExistence type="inferred from homology"/>